<name>YOQ7_CAEEL</name>
<protein>
    <recommendedName>
        <fullName>Uncharacterized protein ZK512.7</fullName>
    </recommendedName>
</protein>
<reference key="1">
    <citation type="journal article" date="1994" name="Nature">
        <title>2.2 Mb of contiguous nucleotide sequence from chromosome III of C. elegans.</title>
        <authorList>
            <person name="Wilson R."/>
            <person name="Ainscough R."/>
            <person name="Anderson K."/>
            <person name="Baynes C."/>
            <person name="Berks M."/>
            <person name="Bonfield J."/>
            <person name="Burton J."/>
            <person name="Connell M."/>
            <person name="Copsey T."/>
            <person name="Cooper J."/>
            <person name="Coulson A."/>
            <person name="Craxton M."/>
            <person name="Dear S."/>
            <person name="Du Z."/>
            <person name="Durbin R."/>
            <person name="Favello A."/>
            <person name="Fraser A."/>
            <person name="Fulton L."/>
            <person name="Gardner A."/>
            <person name="Green P."/>
            <person name="Hawkins T."/>
            <person name="Hillier L."/>
            <person name="Jier M."/>
            <person name="Johnston L."/>
            <person name="Jones M."/>
            <person name="Kershaw J."/>
            <person name="Kirsten J."/>
            <person name="Laisster N."/>
            <person name="Latreille P."/>
            <person name="Lightning J."/>
            <person name="Lloyd C."/>
            <person name="Mortimore B."/>
            <person name="O'Callaghan M."/>
            <person name="Parsons J."/>
            <person name="Percy C."/>
            <person name="Rifken L."/>
            <person name="Roopra A."/>
            <person name="Saunders D."/>
            <person name="Shownkeen R."/>
            <person name="Sims M."/>
            <person name="Smaldon N."/>
            <person name="Smith A."/>
            <person name="Smith M."/>
            <person name="Sonnhammer E."/>
            <person name="Staden R."/>
            <person name="Sulston J."/>
            <person name="Thierry-Mieg J."/>
            <person name="Thomas K."/>
            <person name="Vaudin M."/>
            <person name="Vaughan K."/>
            <person name="Waterston R."/>
            <person name="Watson A."/>
            <person name="Weinstock L."/>
            <person name="Wilkinson-Sproat J."/>
            <person name="Wohldman P."/>
        </authorList>
    </citation>
    <scope>NUCLEOTIDE SEQUENCE [LARGE SCALE GENOMIC DNA]</scope>
    <source>
        <strain>Bristol N2</strain>
    </source>
</reference>
<reference key="2">
    <citation type="journal article" date="1998" name="Science">
        <title>Genome sequence of the nematode C. elegans: a platform for investigating biology.</title>
        <authorList>
            <consortium name="The C. elegans sequencing consortium"/>
        </authorList>
    </citation>
    <scope>NUCLEOTIDE SEQUENCE [LARGE SCALE GENOMIC DNA]</scope>
    <source>
        <strain>Bristol N2</strain>
    </source>
</reference>
<gene>
    <name type="ORF">ZK512.7</name>
</gene>
<dbReference type="EMBL" id="Z22177">
    <property type="protein sequence ID" value="CAA80147.1"/>
    <property type="molecule type" value="Genomic_DNA"/>
</dbReference>
<dbReference type="PIR" id="S40768">
    <property type="entry name" value="S40768"/>
</dbReference>
<dbReference type="RefSeq" id="NP_499024.1">
    <property type="nucleotide sequence ID" value="NM_066623.6"/>
</dbReference>
<dbReference type="FunCoup" id="P34645">
    <property type="interactions" value="289"/>
</dbReference>
<dbReference type="PaxDb" id="6239-ZK512.7"/>
<dbReference type="PeptideAtlas" id="P34645"/>
<dbReference type="EnsemblMetazoa" id="ZK512.7.1">
    <property type="protein sequence ID" value="ZK512.7.1"/>
    <property type="gene ID" value="WBGene00013986"/>
</dbReference>
<dbReference type="GeneID" id="176290"/>
<dbReference type="KEGG" id="cel:CELE_ZK512.7"/>
<dbReference type="UCSC" id="ZK512.7">
    <property type="organism name" value="c. elegans"/>
</dbReference>
<dbReference type="AGR" id="WB:WBGene00013986"/>
<dbReference type="CTD" id="176290"/>
<dbReference type="WormBase" id="ZK512.7">
    <property type="protein sequence ID" value="CE00413"/>
    <property type="gene ID" value="WBGene00013986"/>
</dbReference>
<dbReference type="eggNOG" id="ENOG502TIV2">
    <property type="taxonomic scope" value="Eukaryota"/>
</dbReference>
<dbReference type="GeneTree" id="ENSGT00970000197190"/>
<dbReference type="HOGENOM" id="CLU_1827047_0_0_1"/>
<dbReference type="InParanoid" id="P34645"/>
<dbReference type="OMA" id="ESWTLNR"/>
<dbReference type="OrthoDB" id="5778971at2759"/>
<dbReference type="PhylomeDB" id="P34645"/>
<dbReference type="PRO" id="PR:P34645"/>
<dbReference type="Proteomes" id="UP000001940">
    <property type="component" value="Chromosome III"/>
</dbReference>
<dbReference type="Bgee" id="WBGene00013986">
    <property type="expression patterns" value="Expressed in adult organism and 2 other cell types or tissues"/>
</dbReference>
<feature type="chain" id="PRO_0000065520" description="Uncharacterized protein ZK512.7">
    <location>
        <begin position="1"/>
        <end position="141"/>
    </location>
</feature>
<sequence length="141" mass="15990">MQFFISSAILFSYAFCQSIPNVILTGEPRVVARRILNVDMKAAQQLALPDDQQHVRYQVNVVRNQENPSDSTYLTGERTPVTVYRRILRPARITFTGDGVITDSWQGTSDAVEMESWTLNRRPTIDGSFVQPTQNQQGAFH</sequence>
<proteinExistence type="predicted"/>
<keyword id="KW-1185">Reference proteome</keyword>
<accession>P34645</accession>
<organism>
    <name type="scientific">Caenorhabditis elegans</name>
    <dbReference type="NCBI Taxonomy" id="6239"/>
    <lineage>
        <taxon>Eukaryota</taxon>
        <taxon>Metazoa</taxon>
        <taxon>Ecdysozoa</taxon>
        <taxon>Nematoda</taxon>
        <taxon>Chromadorea</taxon>
        <taxon>Rhabditida</taxon>
        <taxon>Rhabditina</taxon>
        <taxon>Rhabditomorpha</taxon>
        <taxon>Rhabditoidea</taxon>
        <taxon>Rhabditidae</taxon>
        <taxon>Peloderinae</taxon>
        <taxon>Caenorhabditis</taxon>
    </lineage>
</organism>